<reference key="1">
    <citation type="journal article" date="2008" name="PLoS ONE">
        <title>Environmental adaptation: genomic analysis of the piezotolerant and psychrotolerant deep-sea iron reducing bacterium Shewanella piezotolerans WP3.</title>
        <authorList>
            <person name="Wang F."/>
            <person name="Wang J."/>
            <person name="Jian H."/>
            <person name="Zhang B."/>
            <person name="Li S."/>
            <person name="Wang F."/>
            <person name="Zeng X."/>
            <person name="Gao L."/>
            <person name="Bartlett D.H."/>
            <person name="Yu J."/>
            <person name="Hu S."/>
            <person name="Xiao X."/>
        </authorList>
    </citation>
    <scope>NUCLEOTIDE SEQUENCE [LARGE SCALE GENOMIC DNA]</scope>
    <source>
        <strain>WP3 / JCM 13877</strain>
    </source>
</reference>
<evidence type="ECO:0000255" key="1">
    <source>
        <dbReference type="HAMAP-Rule" id="MF_00749"/>
    </source>
</evidence>
<evidence type="ECO:0000256" key="2">
    <source>
        <dbReference type="SAM" id="MobiDB-lite"/>
    </source>
</evidence>
<gene>
    <name evidence="1" type="primary">proQ</name>
    <name type="ordered locus">swp_2819</name>
</gene>
<proteinExistence type="inferred from homology"/>
<accession>B8CPG9</accession>
<feature type="chain" id="PRO_1000133309" description="RNA chaperone ProQ">
    <location>
        <begin position="1"/>
        <end position="212"/>
    </location>
</feature>
<feature type="region of interest" description="Disordered" evidence="2">
    <location>
        <begin position="114"/>
        <end position="149"/>
    </location>
</feature>
<feature type="compositionally biased region" description="Low complexity" evidence="2">
    <location>
        <begin position="118"/>
        <end position="129"/>
    </location>
</feature>
<feature type="compositionally biased region" description="Basic residues" evidence="2">
    <location>
        <begin position="130"/>
        <end position="141"/>
    </location>
</feature>
<name>PROQ_SHEPW</name>
<dbReference type="EMBL" id="CP000472">
    <property type="protein sequence ID" value="ACJ29545.1"/>
    <property type="molecule type" value="Genomic_DNA"/>
</dbReference>
<dbReference type="RefSeq" id="WP_020912899.1">
    <property type="nucleotide sequence ID" value="NC_011566.1"/>
</dbReference>
<dbReference type="SMR" id="B8CPG9"/>
<dbReference type="STRING" id="225849.swp_2819"/>
<dbReference type="KEGG" id="swp:swp_2819"/>
<dbReference type="eggNOG" id="COG3109">
    <property type="taxonomic scope" value="Bacteria"/>
</dbReference>
<dbReference type="HOGENOM" id="CLU_113254_0_0_6"/>
<dbReference type="OrthoDB" id="8421419at2"/>
<dbReference type="Proteomes" id="UP000000753">
    <property type="component" value="Chromosome"/>
</dbReference>
<dbReference type="GO" id="GO:0005829">
    <property type="term" value="C:cytosol"/>
    <property type="evidence" value="ECO:0007669"/>
    <property type="project" value="TreeGrafter"/>
</dbReference>
<dbReference type="GO" id="GO:0033592">
    <property type="term" value="F:RNA strand annealing activity"/>
    <property type="evidence" value="ECO:0007669"/>
    <property type="project" value="UniProtKB-UniRule"/>
</dbReference>
<dbReference type="GO" id="GO:0034057">
    <property type="term" value="F:RNA strand-exchange activity"/>
    <property type="evidence" value="ECO:0007669"/>
    <property type="project" value="UniProtKB-UniRule"/>
</dbReference>
<dbReference type="GO" id="GO:0010608">
    <property type="term" value="P:post-transcriptional regulation of gene expression"/>
    <property type="evidence" value="ECO:0007669"/>
    <property type="project" value="InterPro"/>
</dbReference>
<dbReference type="FunFam" id="1.10.1710.10:FF:000001">
    <property type="entry name" value="RNA chaperone ProQ"/>
    <property type="match status" value="1"/>
</dbReference>
<dbReference type="Gene3D" id="1.10.1710.10">
    <property type="entry name" value="ProQ/FinO domain"/>
    <property type="match status" value="1"/>
</dbReference>
<dbReference type="HAMAP" id="MF_00749">
    <property type="entry name" value="ProQ"/>
    <property type="match status" value="1"/>
</dbReference>
<dbReference type="InterPro" id="IPR023529">
    <property type="entry name" value="ProQ"/>
</dbReference>
<dbReference type="InterPro" id="IPR016103">
    <property type="entry name" value="ProQ/FinO"/>
</dbReference>
<dbReference type="InterPro" id="IPR036442">
    <property type="entry name" value="ProQ/FinO_sf"/>
</dbReference>
<dbReference type="InterPro" id="IPR035236">
    <property type="entry name" value="ProQ_C"/>
</dbReference>
<dbReference type="NCBIfam" id="NF003434">
    <property type="entry name" value="PRK04950.1"/>
    <property type="match status" value="1"/>
</dbReference>
<dbReference type="PANTHER" id="PTHR38106">
    <property type="entry name" value="RNA CHAPERONE PROQ"/>
    <property type="match status" value="1"/>
</dbReference>
<dbReference type="PANTHER" id="PTHR38106:SF1">
    <property type="entry name" value="RNA CHAPERONE PROQ"/>
    <property type="match status" value="1"/>
</dbReference>
<dbReference type="Pfam" id="PF04352">
    <property type="entry name" value="ProQ"/>
    <property type="match status" value="1"/>
</dbReference>
<dbReference type="Pfam" id="PF17516">
    <property type="entry name" value="ProQ_C"/>
    <property type="match status" value="1"/>
</dbReference>
<dbReference type="SMART" id="SM00945">
    <property type="entry name" value="ProQ"/>
    <property type="match status" value="1"/>
</dbReference>
<dbReference type="SUPFAM" id="SSF48657">
    <property type="entry name" value="FinO-like"/>
    <property type="match status" value="1"/>
</dbReference>
<protein>
    <recommendedName>
        <fullName evidence="1">RNA chaperone ProQ</fullName>
    </recommendedName>
</protein>
<comment type="function">
    <text evidence="1">RNA chaperone with significant RNA binding, RNA strand exchange and RNA duplexing activities.</text>
</comment>
<comment type="subcellular location">
    <subcellularLocation>
        <location evidence="1">Cytoplasm</location>
    </subcellularLocation>
</comment>
<comment type="similarity">
    <text evidence="1">Belongs to the ProQ family.</text>
</comment>
<organism>
    <name type="scientific">Shewanella piezotolerans (strain WP3 / JCM 13877)</name>
    <dbReference type="NCBI Taxonomy" id="225849"/>
    <lineage>
        <taxon>Bacteria</taxon>
        <taxon>Pseudomonadati</taxon>
        <taxon>Pseudomonadota</taxon>
        <taxon>Gammaproteobacteria</taxon>
        <taxon>Alteromonadales</taxon>
        <taxon>Shewanellaceae</taxon>
        <taxon>Shewanella</taxon>
    </lineage>
</organism>
<keyword id="KW-0143">Chaperone</keyword>
<keyword id="KW-0963">Cytoplasm</keyword>
<keyword id="KW-0694">RNA-binding</keyword>
<sequence length="212" mass="23342">MESTEKLTDTNAILAYLYETFPLCFIAEGETKPLKIGLFQDLAERLADDSKVSKTQLRIALRRYTSSWRYLKCVKAGTHRIDLDGNSCGELEQEHVDHAQATLKESQEKAKAKRIAKAGKTSAPAANAKKPVKKPVARRPKAAPSAKPVKEKVAEVVLTPAVLTELKKNQRVNVKLGKAPVAGVILDIKKEDVQVQLDSGLTIKVKAEYILL</sequence>